<evidence type="ECO:0000250" key="1"/>
<evidence type="ECO:0000255" key="2"/>
<evidence type="ECO:0000255" key="3">
    <source>
        <dbReference type="PROSITE-ProRule" id="PRU00077"/>
    </source>
</evidence>
<evidence type="ECO:0000255" key="4">
    <source>
        <dbReference type="PROSITE-ProRule" id="PRU00448"/>
    </source>
</evidence>
<evidence type="ECO:0000305" key="5"/>
<protein>
    <recommendedName>
        <fullName>Actin cytoskeleton-regulatory complex protein END3</fullName>
    </recommendedName>
    <alternativeName>
        <fullName>Endocytosis protein 3</fullName>
    </alternativeName>
</protein>
<reference key="1">
    <citation type="journal article" date="2007" name="Proc. Natl. Acad. Sci. U.S.A.">
        <title>Independent sorting-out of thousands of duplicated gene pairs in two yeast species descended from a whole-genome duplication.</title>
        <authorList>
            <person name="Scannell D.R."/>
            <person name="Frank A.C."/>
            <person name="Conant G.C."/>
            <person name="Byrne K.P."/>
            <person name="Woolfit M."/>
            <person name="Wolfe K.H."/>
        </authorList>
    </citation>
    <scope>NUCLEOTIDE SEQUENCE [LARGE SCALE GENOMIC DNA]</scope>
    <source>
        <strain>ATCC 22028 / DSM 70294 / BCRC 21397 / CBS 2163 / NBRC 10782 / NRRL Y-8283 / UCD 57-17</strain>
    </source>
</reference>
<organism>
    <name type="scientific">Vanderwaltozyma polyspora (strain ATCC 22028 / DSM 70294 / BCRC 21397 / CBS 2163 / NBRC 10782 / NRRL Y-8283 / UCD 57-17)</name>
    <name type="common">Kluyveromyces polysporus</name>
    <dbReference type="NCBI Taxonomy" id="436907"/>
    <lineage>
        <taxon>Eukaryota</taxon>
        <taxon>Fungi</taxon>
        <taxon>Dikarya</taxon>
        <taxon>Ascomycota</taxon>
        <taxon>Saccharomycotina</taxon>
        <taxon>Saccharomycetes</taxon>
        <taxon>Saccharomycetales</taxon>
        <taxon>Saccharomycetaceae</taxon>
        <taxon>Vanderwaltozyma</taxon>
    </lineage>
</organism>
<gene>
    <name type="primary">END3</name>
    <name type="ORF">Kpol_1002p118</name>
</gene>
<accession>A7TEE6</accession>
<sequence length="368" mass="42523">MPKLEQFEIKKYWQIFSGLKPVENKVNHDQVLPILYNSKLDSSILNKIWFLADIDDDDNLDFEEFVICMRLIFDMVNKNIDKVPDELPDWLIPGSKAKLVKERKQRKQIENADIPKVETPKIDWYISPEDKKSYENILSGIQTATDGSYSYSSTTLVLKSKFFNIGTSDFEKTWKLVNPKNFASIDKDPTLYFIHILRQRNDLGCNIPSELPKALLDSFSKERVTYDLNSNQSQVTRSSNVRSNTNMSQHTIEAIRMNEIPRGNPNDAASLEIELNSLDAELNRIRDEITRQEDTILIREQFEGLLSYKEQQYQKSKQSSMSPVKLNAKSISDDLSNIEQQVGVLENYLADKKVELQQLESQIQSVNK</sequence>
<proteinExistence type="inferred from homology"/>
<keyword id="KW-0009">Actin-binding</keyword>
<keyword id="KW-0106">Calcium</keyword>
<keyword id="KW-1003">Cell membrane</keyword>
<keyword id="KW-0175">Coiled coil</keyword>
<keyword id="KW-0963">Cytoplasm</keyword>
<keyword id="KW-0206">Cytoskeleton</keyword>
<keyword id="KW-0254">Endocytosis</keyword>
<keyword id="KW-0967">Endosome</keyword>
<keyword id="KW-0472">Membrane</keyword>
<keyword id="KW-0479">Metal-binding</keyword>
<keyword id="KW-1185">Reference proteome</keyword>
<keyword id="KW-0677">Repeat</keyword>
<dbReference type="EMBL" id="DS480379">
    <property type="protein sequence ID" value="EDO19468.1"/>
    <property type="molecule type" value="Genomic_DNA"/>
</dbReference>
<dbReference type="RefSeq" id="XP_001647326.1">
    <property type="nucleotide sequence ID" value="XM_001647276.1"/>
</dbReference>
<dbReference type="FunCoup" id="A7TEE6">
    <property type="interactions" value="149"/>
</dbReference>
<dbReference type="STRING" id="436907.A7TEE6"/>
<dbReference type="GeneID" id="5547823"/>
<dbReference type="KEGG" id="vpo:Kpol_1002p118"/>
<dbReference type="eggNOG" id="KOG0998">
    <property type="taxonomic scope" value="Eukaryota"/>
</dbReference>
<dbReference type="HOGENOM" id="CLU_040829_0_0_1"/>
<dbReference type="InParanoid" id="A7TEE6"/>
<dbReference type="OMA" id="HCLRQRN"/>
<dbReference type="OrthoDB" id="1716625at2759"/>
<dbReference type="PhylomeDB" id="A7TEE6"/>
<dbReference type="Proteomes" id="UP000000267">
    <property type="component" value="Unassembled WGS sequence"/>
</dbReference>
<dbReference type="GO" id="GO:0030479">
    <property type="term" value="C:actin cortical patch"/>
    <property type="evidence" value="ECO:0007669"/>
    <property type="project" value="UniProtKB-SubCell"/>
</dbReference>
<dbReference type="GO" id="GO:1990964">
    <property type="term" value="C:actin cytoskeleton-regulatory complex"/>
    <property type="evidence" value="ECO:0007669"/>
    <property type="project" value="EnsemblFungi"/>
</dbReference>
<dbReference type="GO" id="GO:0010008">
    <property type="term" value="C:endosome membrane"/>
    <property type="evidence" value="ECO:0007669"/>
    <property type="project" value="UniProtKB-SubCell"/>
</dbReference>
<dbReference type="GO" id="GO:0005886">
    <property type="term" value="C:plasma membrane"/>
    <property type="evidence" value="ECO:0007669"/>
    <property type="project" value="UniProtKB-SubCell"/>
</dbReference>
<dbReference type="GO" id="GO:0003779">
    <property type="term" value="F:actin binding"/>
    <property type="evidence" value="ECO:0007669"/>
    <property type="project" value="UniProtKB-KW"/>
</dbReference>
<dbReference type="GO" id="GO:0005509">
    <property type="term" value="F:calcium ion binding"/>
    <property type="evidence" value="ECO:0007669"/>
    <property type="project" value="InterPro"/>
</dbReference>
<dbReference type="GO" id="GO:0030674">
    <property type="term" value="F:protein-macromolecule adaptor activity"/>
    <property type="evidence" value="ECO:0007669"/>
    <property type="project" value="EnsemblFungi"/>
</dbReference>
<dbReference type="GO" id="GO:0007015">
    <property type="term" value="P:actin filament organization"/>
    <property type="evidence" value="ECO:0007669"/>
    <property type="project" value="InterPro"/>
</dbReference>
<dbReference type="GO" id="GO:0030476">
    <property type="term" value="P:ascospore wall assembly"/>
    <property type="evidence" value="ECO:0007669"/>
    <property type="project" value="EnsemblFungi"/>
</dbReference>
<dbReference type="GO" id="GO:0006897">
    <property type="term" value="P:endocytosis"/>
    <property type="evidence" value="ECO:0007669"/>
    <property type="project" value="UniProtKB-KW"/>
</dbReference>
<dbReference type="GO" id="GO:0016197">
    <property type="term" value="P:endosomal transport"/>
    <property type="evidence" value="ECO:0007669"/>
    <property type="project" value="TreeGrafter"/>
</dbReference>
<dbReference type="GO" id="GO:0061709">
    <property type="term" value="P:reticulophagy"/>
    <property type="evidence" value="ECO:0007669"/>
    <property type="project" value="EnsemblFungi"/>
</dbReference>
<dbReference type="CDD" id="cd00052">
    <property type="entry name" value="EH"/>
    <property type="match status" value="1"/>
</dbReference>
<dbReference type="FunFam" id="1.10.238.10:FF:000323">
    <property type="entry name" value="Actin cytoskeleton-regulatory complex protein end3"/>
    <property type="match status" value="1"/>
</dbReference>
<dbReference type="Gene3D" id="1.10.238.10">
    <property type="entry name" value="EF-hand"/>
    <property type="match status" value="2"/>
</dbReference>
<dbReference type="InterPro" id="IPR011992">
    <property type="entry name" value="EF-hand-dom_pair"/>
</dbReference>
<dbReference type="InterPro" id="IPR018247">
    <property type="entry name" value="EF_Hand_1_Ca_BS"/>
</dbReference>
<dbReference type="InterPro" id="IPR002048">
    <property type="entry name" value="EF_hand_dom"/>
</dbReference>
<dbReference type="InterPro" id="IPR000261">
    <property type="entry name" value="EH_dom"/>
</dbReference>
<dbReference type="InterPro" id="IPR025604">
    <property type="entry name" value="End3"/>
</dbReference>
<dbReference type="PANTHER" id="PTHR11216">
    <property type="entry name" value="EH DOMAIN"/>
    <property type="match status" value="1"/>
</dbReference>
<dbReference type="Pfam" id="PF12763">
    <property type="entry name" value="EH"/>
    <property type="match status" value="1"/>
</dbReference>
<dbReference type="Pfam" id="PF12761">
    <property type="entry name" value="End3"/>
    <property type="match status" value="1"/>
</dbReference>
<dbReference type="SMART" id="SM00027">
    <property type="entry name" value="EH"/>
    <property type="match status" value="2"/>
</dbReference>
<dbReference type="SUPFAM" id="SSF47473">
    <property type="entry name" value="EF-hand"/>
    <property type="match status" value="2"/>
</dbReference>
<dbReference type="PROSITE" id="PS00018">
    <property type="entry name" value="EF_HAND_1"/>
    <property type="match status" value="1"/>
</dbReference>
<dbReference type="PROSITE" id="PS50222">
    <property type="entry name" value="EF_HAND_2"/>
    <property type="match status" value="1"/>
</dbReference>
<dbReference type="PROSITE" id="PS50031">
    <property type="entry name" value="EH"/>
    <property type="match status" value="2"/>
</dbReference>
<comment type="function">
    <text evidence="1">Component of the PAN1 actin cytoskeleton-regulatory complex required for the internalization of endosomes during actin-coupled endocytosis. The complex links the site of endocytosis to the cell membrane-associated actin cytoskeleton. Mediates uptake of external molecules and vacuolar degradation of plasma membrane proteins. Plays a role in the proper organization of the cell membrane-associated actin cytoskeleton and promotes its destabilization (By similarity).</text>
</comment>
<comment type="subunit">
    <text evidence="1">Component of the PAN1 actin cytoskeleton-regulatory complex.</text>
</comment>
<comment type="subcellular location">
    <subcellularLocation>
        <location evidence="1">Cell membrane</location>
        <topology evidence="1">Peripheral membrane protein</topology>
        <orientation evidence="1">Cytoplasmic side</orientation>
    </subcellularLocation>
    <subcellularLocation>
        <location evidence="1">Endosome membrane</location>
        <topology evidence="1">Peripheral membrane protein</topology>
        <orientation evidence="1">Cytoplasmic side</orientation>
    </subcellularLocation>
    <subcellularLocation>
        <location evidence="1">Cytoplasm</location>
        <location evidence="1">Cytoskeleton</location>
        <location evidence="1">Actin patch</location>
    </subcellularLocation>
    <text evidence="1">Cytoplasmic and cortical actin patches.</text>
</comment>
<comment type="similarity">
    <text evidence="5">Belongs to the END3 family.</text>
</comment>
<feature type="chain" id="PRO_0000349459" description="Actin cytoskeleton-regulatory complex protein END3">
    <location>
        <begin position="1"/>
        <end position="368"/>
    </location>
</feature>
<feature type="domain" description="EH 1" evidence="3">
    <location>
        <begin position="8"/>
        <end position="98"/>
    </location>
</feature>
<feature type="domain" description="EF-hand" evidence="4">
    <location>
        <begin position="40"/>
        <end position="75"/>
    </location>
</feature>
<feature type="domain" description="EH 2" evidence="3">
    <location>
        <begin position="130"/>
        <end position="222"/>
    </location>
</feature>
<feature type="coiled-coil region" evidence="2">
    <location>
        <begin position="266"/>
        <end position="368"/>
    </location>
</feature>
<feature type="binding site" evidence="4">
    <location>
        <position position="53"/>
    </location>
    <ligand>
        <name>Ca(2+)</name>
        <dbReference type="ChEBI" id="CHEBI:29108"/>
    </ligand>
</feature>
<feature type="binding site" evidence="4">
    <location>
        <position position="55"/>
    </location>
    <ligand>
        <name>Ca(2+)</name>
        <dbReference type="ChEBI" id="CHEBI:29108"/>
    </ligand>
</feature>
<feature type="binding site" evidence="4">
    <location>
        <position position="57"/>
    </location>
    <ligand>
        <name>Ca(2+)</name>
        <dbReference type="ChEBI" id="CHEBI:29108"/>
    </ligand>
</feature>
<feature type="binding site" evidence="4">
    <location>
        <position position="59"/>
    </location>
    <ligand>
        <name>Ca(2+)</name>
        <dbReference type="ChEBI" id="CHEBI:29108"/>
    </ligand>
</feature>
<feature type="binding site" evidence="4">
    <location>
        <position position="64"/>
    </location>
    <ligand>
        <name>Ca(2+)</name>
        <dbReference type="ChEBI" id="CHEBI:29108"/>
    </ligand>
</feature>
<name>END3_VANPO</name>